<name>EFP_WOLTR</name>
<organism>
    <name type="scientific">Wolbachia sp. subsp. Brugia malayi (strain TRS)</name>
    <dbReference type="NCBI Taxonomy" id="292805"/>
    <lineage>
        <taxon>Bacteria</taxon>
        <taxon>Pseudomonadati</taxon>
        <taxon>Pseudomonadota</taxon>
        <taxon>Alphaproteobacteria</taxon>
        <taxon>Rickettsiales</taxon>
        <taxon>Anaplasmataceae</taxon>
        <taxon>Wolbachieae</taxon>
        <taxon>Wolbachia</taxon>
    </lineage>
</organism>
<keyword id="KW-0963">Cytoplasm</keyword>
<keyword id="KW-0251">Elongation factor</keyword>
<keyword id="KW-0648">Protein biosynthesis</keyword>
<keyword id="KW-1185">Reference proteome</keyword>
<accession>Q5GTF2</accession>
<protein>
    <recommendedName>
        <fullName evidence="1">Elongation factor P</fullName>
        <shortName evidence="1">EF-P</shortName>
    </recommendedName>
</protein>
<comment type="function">
    <text evidence="1">Involved in peptide bond synthesis. Stimulates efficient translation and peptide-bond synthesis on native or reconstituted 70S ribosomes in vitro. Probably functions indirectly by altering the affinity of the ribosome for aminoacyl-tRNA, thus increasing their reactivity as acceptors for peptidyl transferase.</text>
</comment>
<comment type="pathway">
    <text evidence="1">Protein biosynthesis; polypeptide chain elongation.</text>
</comment>
<comment type="subcellular location">
    <subcellularLocation>
        <location evidence="1">Cytoplasm</location>
    </subcellularLocation>
</comment>
<comment type="similarity">
    <text evidence="1">Belongs to the elongation factor P family.</text>
</comment>
<dbReference type="EMBL" id="AE017321">
    <property type="protein sequence ID" value="AAW70722.1"/>
    <property type="molecule type" value="Genomic_DNA"/>
</dbReference>
<dbReference type="RefSeq" id="WP_011256332.1">
    <property type="nucleotide sequence ID" value="NC_006833.1"/>
</dbReference>
<dbReference type="SMR" id="Q5GTF2"/>
<dbReference type="STRING" id="292805.Wbm0131"/>
<dbReference type="KEGG" id="wbm:Wbm0131"/>
<dbReference type="eggNOG" id="COG0231">
    <property type="taxonomic scope" value="Bacteria"/>
</dbReference>
<dbReference type="HOGENOM" id="CLU_074944_1_1_5"/>
<dbReference type="UniPathway" id="UPA00345"/>
<dbReference type="Proteomes" id="UP000000534">
    <property type="component" value="Chromosome"/>
</dbReference>
<dbReference type="GO" id="GO:0005737">
    <property type="term" value="C:cytoplasm"/>
    <property type="evidence" value="ECO:0007669"/>
    <property type="project" value="UniProtKB-SubCell"/>
</dbReference>
<dbReference type="GO" id="GO:0003746">
    <property type="term" value="F:translation elongation factor activity"/>
    <property type="evidence" value="ECO:0007669"/>
    <property type="project" value="UniProtKB-UniRule"/>
</dbReference>
<dbReference type="GO" id="GO:0043043">
    <property type="term" value="P:peptide biosynthetic process"/>
    <property type="evidence" value="ECO:0007669"/>
    <property type="project" value="InterPro"/>
</dbReference>
<dbReference type="CDD" id="cd05794">
    <property type="entry name" value="S1_EF-P_repeat_2"/>
    <property type="match status" value="1"/>
</dbReference>
<dbReference type="FunFam" id="2.40.50.140:FF:000004">
    <property type="entry name" value="Elongation factor P"/>
    <property type="match status" value="1"/>
</dbReference>
<dbReference type="Gene3D" id="2.30.30.30">
    <property type="match status" value="1"/>
</dbReference>
<dbReference type="Gene3D" id="2.40.50.140">
    <property type="entry name" value="Nucleic acid-binding proteins"/>
    <property type="match status" value="2"/>
</dbReference>
<dbReference type="HAMAP" id="MF_00141">
    <property type="entry name" value="EF_P"/>
    <property type="match status" value="1"/>
</dbReference>
<dbReference type="InterPro" id="IPR015365">
    <property type="entry name" value="Elong-fact-P_C"/>
</dbReference>
<dbReference type="InterPro" id="IPR012340">
    <property type="entry name" value="NA-bd_OB-fold"/>
</dbReference>
<dbReference type="InterPro" id="IPR014722">
    <property type="entry name" value="Rib_uL2_dom2"/>
</dbReference>
<dbReference type="InterPro" id="IPR020599">
    <property type="entry name" value="Transl_elong_fac_P/YeiP"/>
</dbReference>
<dbReference type="InterPro" id="IPR013185">
    <property type="entry name" value="Transl_elong_KOW-like"/>
</dbReference>
<dbReference type="InterPro" id="IPR001059">
    <property type="entry name" value="Transl_elong_P/YeiP_cen"/>
</dbReference>
<dbReference type="InterPro" id="IPR011768">
    <property type="entry name" value="Transl_elongation_fac_P"/>
</dbReference>
<dbReference type="InterPro" id="IPR008991">
    <property type="entry name" value="Translation_prot_SH3-like_sf"/>
</dbReference>
<dbReference type="NCBIfam" id="TIGR00038">
    <property type="entry name" value="efp"/>
    <property type="match status" value="1"/>
</dbReference>
<dbReference type="NCBIfam" id="NF001810">
    <property type="entry name" value="PRK00529.1"/>
    <property type="match status" value="1"/>
</dbReference>
<dbReference type="PANTHER" id="PTHR30053">
    <property type="entry name" value="ELONGATION FACTOR P"/>
    <property type="match status" value="1"/>
</dbReference>
<dbReference type="PANTHER" id="PTHR30053:SF14">
    <property type="entry name" value="TRANSLATION ELONGATION FACTOR KOW-LIKE DOMAIN-CONTAINING PROTEIN"/>
    <property type="match status" value="1"/>
</dbReference>
<dbReference type="Pfam" id="PF01132">
    <property type="entry name" value="EFP"/>
    <property type="match status" value="1"/>
</dbReference>
<dbReference type="Pfam" id="PF08207">
    <property type="entry name" value="EFP_N"/>
    <property type="match status" value="1"/>
</dbReference>
<dbReference type="Pfam" id="PF09285">
    <property type="entry name" value="Elong-fact-P_C"/>
    <property type="match status" value="1"/>
</dbReference>
<dbReference type="PIRSF" id="PIRSF005901">
    <property type="entry name" value="EF-P"/>
    <property type="match status" value="1"/>
</dbReference>
<dbReference type="SMART" id="SM01185">
    <property type="entry name" value="EFP"/>
    <property type="match status" value="1"/>
</dbReference>
<dbReference type="SMART" id="SM00841">
    <property type="entry name" value="Elong-fact-P_C"/>
    <property type="match status" value="1"/>
</dbReference>
<dbReference type="SUPFAM" id="SSF50249">
    <property type="entry name" value="Nucleic acid-binding proteins"/>
    <property type="match status" value="2"/>
</dbReference>
<dbReference type="SUPFAM" id="SSF50104">
    <property type="entry name" value="Translation proteins SH3-like domain"/>
    <property type="match status" value="1"/>
</dbReference>
<sequence length="188" mass="21813">MAERANDIRPGQVLEHNGGLFLVVSIMHTQPGKGGAYIQAEMKNIKTGAKLYERFRSDATIRRAILDEEEYIYLFTEGNIVNLMHPSNYEQITINLDLLEEKKIYLQDNMRIKVVTYQDKIIFAHVPDYVRLTVKETESFIKGQTITSSYKPAVLENGMRINVPQFIKEEDKIVVYTPDDSYYERVKE</sequence>
<feature type="chain" id="PRO_1000010898" description="Elongation factor P">
    <location>
        <begin position="1"/>
        <end position="188"/>
    </location>
</feature>
<evidence type="ECO:0000255" key="1">
    <source>
        <dbReference type="HAMAP-Rule" id="MF_00141"/>
    </source>
</evidence>
<reference key="1">
    <citation type="journal article" date="2005" name="PLoS Biol.">
        <title>The Wolbachia genome of Brugia malayi: endosymbiont evolution within a human pathogenic nematode.</title>
        <authorList>
            <person name="Foster J."/>
            <person name="Ganatra M."/>
            <person name="Kamal I."/>
            <person name="Ware J."/>
            <person name="Makarova K."/>
            <person name="Ivanova N."/>
            <person name="Bhattacharyya A."/>
            <person name="Kapatral V."/>
            <person name="Kumar S."/>
            <person name="Posfai J."/>
            <person name="Vincze T."/>
            <person name="Ingram J."/>
            <person name="Moran L."/>
            <person name="Lapidus A."/>
            <person name="Omelchenko M."/>
            <person name="Kyrpides N."/>
            <person name="Ghedin E."/>
            <person name="Wang S."/>
            <person name="Goltsman E."/>
            <person name="Joukov V."/>
            <person name="Ostrovskaya O."/>
            <person name="Tsukerman K."/>
            <person name="Mazur M."/>
            <person name="Comb D."/>
            <person name="Koonin E."/>
            <person name="Slatko B."/>
        </authorList>
    </citation>
    <scope>NUCLEOTIDE SEQUENCE [LARGE SCALE GENOMIC DNA]</scope>
    <source>
        <strain>TRS</strain>
    </source>
</reference>
<proteinExistence type="inferred from homology"/>
<gene>
    <name evidence="1" type="primary">efp</name>
    <name type="ordered locus">Wbm0131</name>
</gene>